<accession>Q1JBS5</accession>
<evidence type="ECO:0000255" key="1">
    <source>
        <dbReference type="HAMAP-Rule" id="MF_01511"/>
    </source>
</evidence>
<evidence type="ECO:0000305" key="2"/>
<proteinExistence type="inferred from homology"/>
<reference key="1">
    <citation type="journal article" date="2006" name="Proc. Natl. Acad. Sci. U.S.A.">
        <title>Molecular genetic anatomy of inter- and intraserotype variation in the human bacterial pathogen group A Streptococcus.</title>
        <authorList>
            <person name="Beres S.B."/>
            <person name="Richter E.W."/>
            <person name="Nagiec M.J."/>
            <person name="Sumby P."/>
            <person name="Porcella S.F."/>
            <person name="DeLeo F.R."/>
            <person name="Musser J.M."/>
        </authorList>
    </citation>
    <scope>NUCLEOTIDE SEQUENCE [LARGE SCALE GENOMIC DNA]</scope>
    <source>
        <strain>MGAS2096</strain>
    </source>
</reference>
<dbReference type="EC" id="1.7.1.7" evidence="1"/>
<dbReference type="EMBL" id="CP000261">
    <property type="protein sequence ID" value="ABF35983.1"/>
    <property type="status" value="ALT_INIT"/>
    <property type="molecule type" value="Genomic_DNA"/>
</dbReference>
<dbReference type="SMR" id="Q1JBS5"/>
<dbReference type="KEGG" id="spj:MGAS2096_Spy0931"/>
<dbReference type="HOGENOM" id="CLU_022552_5_0_9"/>
<dbReference type="GO" id="GO:0005829">
    <property type="term" value="C:cytosol"/>
    <property type="evidence" value="ECO:0007669"/>
    <property type="project" value="TreeGrafter"/>
</dbReference>
<dbReference type="GO" id="GO:1902560">
    <property type="term" value="C:GMP reductase complex"/>
    <property type="evidence" value="ECO:0007669"/>
    <property type="project" value="InterPro"/>
</dbReference>
<dbReference type="GO" id="GO:0003920">
    <property type="term" value="F:GMP reductase activity"/>
    <property type="evidence" value="ECO:0007669"/>
    <property type="project" value="UniProtKB-UniRule"/>
</dbReference>
<dbReference type="GO" id="GO:0006163">
    <property type="term" value="P:purine nucleotide metabolic process"/>
    <property type="evidence" value="ECO:0007669"/>
    <property type="project" value="UniProtKB-UniRule"/>
</dbReference>
<dbReference type="CDD" id="cd00381">
    <property type="entry name" value="IMPDH"/>
    <property type="match status" value="1"/>
</dbReference>
<dbReference type="FunFam" id="3.20.20.70:FF:000424">
    <property type="entry name" value="Inosine-5'-monophosphate dehydrogenase 2"/>
    <property type="match status" value="1"/>
</dbReference>
<dbReference type="Gene3D" id="3.20.20.70">
    <property type="entry name" value="Aldolase class I"/>
    <property type="match status" value="1"/>
</dbReference>
<dbReference type="HAMAP" id="MF_01511">
    <property type="entry name" value="GMP_reduct_type2"/>
    <property type="match status" value="1"/>
</dbReference>
<dbReference type="InterPro" id="IPR013785">
    <property type="entry name" value="Aldolase_TIM"/>
</dbReference>
<dbReference type="InterPro" id="IPR050139">
    <property type="entry name" value="GMP_reductase"/>
</dbReference>
<dbReference type="InterPro" id="IPR005994">
    <property type="entry name" value="GuaC_type_2"/>
</dbReference>
<dbReference type="InterPro" id="IPR015875">
    <property type="entry name" value="IMP_DH/GMP_Rdtase_CS"/>
</dbReference>
<dbReference type="InterPro" id="IPR001093">
    <property type="entry name" value="IMP_DH_GMPRt"/>
</dbReference>
<dbReference type="NCBIfam" id="TIGR01306">
    <property type="entry name" value="GMP_reduct_2"/>
    <property type="match status" value="1"/>
</dbReference>
<dbReference type="NCBIfam" id="NF003966">
    <property type="entry name" value="PRK05458.1"/>
    <property type="match status" value="1"/>
</dbReference>
<dbReference type="PANTHER" id="PTHR43170">
    <property type="entry name" value="GMP REDUCTASE"/>
    <property type="match status" value="1"/>
</dbReference>
<dbReference type="PANTHER" id="PTHR43170:SF5">
    <property type="entry name" value="GMP REDUCTASE"/>
    <property type="match status" value="1"/>
</dbReference>
<dbReference type="Pfam" id="PF00478">
    <property type="entry name" value="IMPDH"/>
    <property type="match status" value="1"/>
</dbReference>
<dbReference type="PIRSF" id="PIRSF036500">
    <property type="entry name" value="GMP_red_Firmic"/>
    <property type="match status" value="1"/>
</dbReference>
<dbReference type="SMART" id="SM01240">
    <property type="entry name" value="IMPDH"/>
    <property type="match status" value="1"/>
</dbReference>
<dbReference type="SUPFAM" id="SSF51412">
    <property type="entry name" value="Inosine monophosphate dehydrogenase (IMPDH)"/>
    <property type="match status" value="1"/>
</dbReference>
<dbReference type="PROSITE" id="PS00487">
    <property type="entry name" value="IMP_DH_GMP_RED"/>
    <property type="match status" value="1"/>
</dbReference>
<comment type="function">
    <text evidence="1">Catalyzes the irreversible NADPH-dependent deamination of GMP to IMP. It functions in the conversion of nucleobase, nucleoside and nucleotide derivatives of G to A nucleotides, and in maintaining the intracellular balance of A and G nucleotides.</text>
</comment>
<comment type="catalytic activity">
    <reaction evidence="1">
        <text>IMP + NH4(+) + NADP(+) = GMP + NADPH + 2 H(+)</text>
        <dbReference type="Rhea" id="RHEA:17185"/>
        <dbReference type="ChEBI" id="CHEBI:15378"/>
        <dbReference type="ChEBI" id="CHEBI:28938"/>
        <dbReference type="ChEBI" id="CHEBI:57783"/>
        <dbReference type="ChEBI" id="CHEBI:58053"/>
        <dbReference type="ChEBI" id="CHEBI:58115"/>
        <dbReference type="ChEBI" id="CHEBI:58349"/>
        <dbReference type="EC" id="1.7.1.7"/>
    </reaction>
</comment>
<comment type="similarity">
    <text evidence="1">Belongs to the IMPDH/GMPR family. GuaC type 2 subfamily.</text>
</comment>
<comment type="sequence caution" evidence="2">
    <conflict type="erroneous initiation">
        <sequence resource="EMBL-CDS" id="ABF35983"/>
    </conflict>
</comment>
<gene>
    <name evidence="1" type="primary">guaC</name>
    <name type="ordered locus">MGAS2096_Spy0931</name>
</gene>
<name>GUAC_STRPB</name>
<feature type="chain" id="PRO_0000292055" description="GMP reductase">
    <location>
        <begin position="1"/>
        <end position="327"/>
    </location>
</feature>
<feature type="active site" description="Thioimidate intermediate" evidence="1">
    <location>
        <position position="176"/>
    </location>
</feature>
<feature type="binding site" evidence="1">
    <location>
        <begin position="205"/>
        <end position="228"/>
    </location>
    <ligand>
        <name>NADP(+)</name>
        <dbReference type="ChEBI" id="CHEBI:58349"/>
    </ligand>
</feature>
<organism>
    <name type="scientific">Streptococcus pyogenes serotype M12 (strain MGAS2096)</name>
    <dbReference type="NCBI Taxonomy" id="370553"/>
    <lineage>
        <taxon>Bacteria</taxon>
        <taxon>Bacillati</taxon>
        <taxon>Bacillota</taxon>
        <taxon>Bacilli</taxon>
        <taxon>Lactobacillales</taxon>
        <taxon>Streptococcaceae</taxon>
        <taxon>Streptococcus</taxon>
    </lineage>
</organism>
<sequence length="327" mass="35960">MFNDIPVFDYEDIQLIPNKCIITSRSQADTSVTLGKYQFKLPVIPANMQTIIDETIAEQLAKEGYFYIMHRFDEDSRKPFIKRMHEQGLIASISVGVKAYEYEFVTSLKEDTPEFITIDIAHGHANSVIDMIKHIKTELPETFVIAGNVGTPEAVRELENAGADATKVGIGPGKVCITKVKTGFGTGGWQLAALRWCAKAARKPIIADGGIRTHGDIAKSIRFGASMVMIGSLFAGHIESPGKTVEVNGETFKEYYGSASAYQKGEHKNVEGKKILLPTKGHLSDTLTEMQQDLQSSISYAGGKDLDSLRHVDYVIVKNSIWNGDSI</sequence>
<keyword id="KW-0521">NADP</keyword>
<keyword id="KW-0560">Oxidoreductase</keyword>
<protein>
    <recommendedName>
        <fullName evidence="1">GMP reductase</fullName>
        <ecNumber evidence="1">1.7.1.7</ecNumber>
    </recommendedName>
    <alternativeName>
        <fullName evidence="1">Guanosine 5'-monophosphate oxidoreductase</fullName>
        <shortName evidence="1">Guanosine monophosphate reductase</shortName>
    </alternativeName>
</protein>